<comment type="function">
    <text>Binds to sialic acid-containing receptors on the cell surface, bringing about the attachment of the virus particle to the cell. This attachment induces virion internalization of about two third of the virus particles through clathrin-dependent endocytosis and about one third through a clathrin- and caveolin-independent pathway. Plays a major role in the determination of host range restriction and virulence. Class I viral fusion protein. Responsible for penetration of the virus into the cell cytoplasm by mediating the fusion of the membrane of the endocytosed virus particle with the endosomal membrane. Low pH in endosomes induces an irreversible conformational change in HA2, releasing the fusion hydrophobic peptide. Several trimers are required to form a competent fusion pore.</text>
</comment>
<comment type="function">
    <text evidence="1">Binds to sialic acid-containing receptors on the cell surface, bringing about the attachment of the virus particle to the cell. This attachment induces virion internalization either through clathrin-dependent endocytosis or through clathrin- and caveolin-independent pathway. Plays a major role in the determination of host range restriction and virulence. Class I viral fusion protein. Responsible for penetration of the virus into the cell cytoplasm by mediating the fusion of the membrane of the endocytosed virus particle with the endosomal membrane. Low pH in endosomes induces an irreversible conformational change in HA2, releasing the fusion hydrophobic peptide. Several trimers are required to form a competent fusion pore.</text>
</comment>
<comment type="subunit">
    <text evidence="1">Homotrimer of disulfide-linked HA1-HA2.</text>
</comment>
<comment type="subcellular location">
    <subcellularLocation>
        <location evidence="1">Virion membrane</location>
        <topology evidence="1">Single-pass type I membrane protein</topology>
    </subcellularLocation>
    <subcellularLocation>
        <location evidence="1">Host apical cell membrane</location>
        <topology evidence="1">Single-pass type I membrane protein</topology>
    </subcellularLocation>
    <text evidence="1">Targeted to the apical plasma membrane in epithelial polarized cells through a signal present in the transmembrane domain. Associated with glycosphingolipid- and cholesterol-enriched detergent-resistant lipid rafts.</text>
</comment>
<comment type="PTM">
    <text evidence="1">Palmitoylated.</text>
</comment>
<comment type="PTM">
    <text evidence="1">In natural infection, inactive HA is matured into HA1 and HA2 outside the cell by one or more trypsin-like, arginine-specific endoprotease secreted by the bronchial epithelial cells. One identified protease that may be involved in this process is secreted in lungs by club cells.</text>
</comment>
<comment type="miscellaneous">
    <text>Major glycoprotein, comprises over 80% of the envelope proteins present in virus particle.</text>
</comment>
<comment type="miscellaneous">
    <text>The extent of infection into host organism is determined by HA. Influenza viruses bud from the apical surface of polarized epithelial cells (e.g. bronchial epithelial cells) into lumen of lungs and are therefore usually pneumotropic. The reason is that HA is cleaved by tryptase clara which is restricted to lungs. However, HAs of H5 and H7 pantropic avian viruses subtypes can be cleaved by furin and subtilisin-type enzymes, allowing the virus to grow in other organs than lungs.</text>
</comment>
<comment type="miscellaneous">
    <text evidence="2">The influenza A genome consist of 8 RNA segments. Genetic variation of hemagglutinin and/or neuraminidase genes results in the emergence of new influenza strains. The mechanism of variation can be the result of point mutations or the result of genetic reassortment between segments of two different strains.</text>
</comment>
<comment type="similarity">
    <text evidence="1">Belongs to the influenza viruses hemagglutinin family.</text>
</comment>
<feature type="signal peptide" evidence="1">
    <location>
        <begin position="1"/>
        <end position="16"/>
    </location>
</feature>
<feature type="chain" id="PRO_0000440525" description="Hemagglutinin" evidence="1">
    <location>
        <begin position="17"/>
        <end position="564"/>
    </location>
</feature>
<feature type="chain" id="PRO_0000039022" description="Hemagglutinin HA1 chain" evidence="1">
    <location>
        <begin position="17"/>
        <end position="341"/>
    </location>
</feature>
<feature type="chain" id="PRO_0000039023" description="Hemagglutinin HA2 chain" evidence="1">
    <location>
        <begin position="343"/>
        <end position="564"/>
    </location>
</feature>
<feature type="topological domain" description="Extracellular" evidence="1">
    <location>
        <begin position="17"/>
        <end position="527"/>
    </location>
</feature>
<feature type="transmembrane region" description="Helical" evidence="1">
    <location>
        <begin position="528"/>
        <end position="548"/>
    </location>
</feature>
<feature type="topological domain" description="Cytoplasmic" evidence="1">
    <location>
        <begin position="549"/>
        <end position="564"/>
    </location>
</feature>
<feature type="site" description="Cleavage; by host" evidence="1">
    <location>
        <begin position="342"/>
        <end position="343"/>
    </location>
</feature>
<feature type="lipid moiety-binding region" description="S-palmitoyl cysteine; by host" evidence="1">
    <location>
        <position position="553"/>
    </location>
</feature>
<feature type="lipid moiety-binding region" description="S-palmitoyl cysteine; by host" evidence="1">
    <location>
        <position position="560"/>
    </location>
</feature>
<feature type="lipid moiety-binding region" description="S-palmitoyl cysteine; by host" evidence="1">
    <location>
        <position position="563"/>
    </location>
</feature>
<feature type="glycosylation site" description="N-linked (GlcNAc...) asparagine; by host" evidence="1">
    <location>
        <position position="26"/>
    </location>
</feature>
<feature type="glycosylation site" description="N-linked (GlcNAc...) asparagine; by host" evidence="1">
    <location>
        <position position="27"/>
    </location>
</feature>
<feature type="glycosylation site" description="N-linked (GlcNAc...) asparagine; by host" evidence="1">
    <location>
        <position position="39"/>
    </location>
</feature>
<feature type="glycosylation site" description="N-linked (GlcNAc...) asparagine; by host" evidence="1">
    <location>
        <position position="181"/>
    </location>
</feature>
<feature type="glycosylation site" description="N-linked (GlcNAc...) asparagine; by host" evidence="1">
    <location>
        <position position="302"/>
    </location>
</feature>
<feature type="glycosylation site" description="N-linked (GlcNAc...) asparagine; by host" evidence="1">
    <location>
        <position position="496"/>
    </location>
</feature>
<feature type="disulfide bond" description="Interchain (between HA1 and HA2 chains)" evidence="1">
    <location>
        <begin position="20"/>
        <end position="479"/>
    </location>
</feature>
<feature type="disulfide bond" evidence="1">
    <location>
        <begin position="58"/>
        <end position="290"/>
    </location>
</feature>
<feature type="disulfide bond" evidence="1">
    <location>
        <begin position="71"/>
        <end position="83"/>
    </location>
</feature>
<feature type="disulfide bond" evidence="1">
    <location>
        <begin position="106"/>
        <end position="151"/>
    </location>
</feature>
<feature type="disulfide bond" evidence="1">
    <location>
        <begin position="294"/>
        <end position="318"/>
    </location>
</feature>
<feature type="disulfide bond" evidence="1">
    <location>
        <begin position="486"/>
        <end position="490"/>
    </location>
</feature>
<sequence length="564" mass="63675">MERIVIALAIINIVKGDQICIGYHANNSTEQVDTIMEKNVTVTHAQDILEKEHNGKLCSLKGVRPLILKDCSVAGWLLGNPMCDEFLNVPEWSYIVEKDNPVNGLCYPGDFNDYEELKHLMSSTNHFEKIQIIPRNSWSTHDASSGVSSACPYNGRSSFFRNVVWLIKKNNAYPTIKRTYNNTNVEDLLILWGIHHPNDAAEQTKLYQNSNTYVSVGTSTLNQRSIPEIATRPKVNGQSGRMEFFWTILRPNDAISFESNGNFIAPEYAYKIVKKGDSAIMKSELEYGNCDTKCQTPVGAINSSMPFHNVHPLTIGECPKYVKSDKLVLATGLRNVPQRETRGLFGAIAGFIEGGWQGMVDGWYGYHHSNEQGSGYAADKESTQKAIDGITNKVNSIIDKMNTQFEAVGKEFNNLERRIENLNKKMEDGFLDVWTYNAELLVLMENERTLDFHDSNVKNLYDKVRLQLRDNAKELGNGCFEFYHKCDNECMESVRNGTYDYPQYSEESRLNREEIDGVKLESMGTYQILSIYSTVASSLALAIMVAGLSFWMCSNGSLQCRICI</sequence>
<evidence type="ECO:0000255" key="1">
    <source>
        <dbReference type="HAMAP-Rule" id="MF_04072"/>
    </source>
</evidence>
<evidence type="ECO:0000305" key="2"/>
<organismHost>
    <name type="scientific">Aves</name>
    <dbReference type="NCBI Taxonomy" id="8782"/>
</organismHost>
<gene>
    <name evidence="1" type="primary">HA</name>
</gene>
<protein>
    <recommendedName>
        <fullName evidence="1">Hemagglutinin</fullName>
    </recommendedName>
    <component>
        <recommendedName>
            <fullName evidence="1">Hemagglutinin HA1 chain</fullName>
        </recommendedName>
    </component>
    <component>
        <recommendedName>
            <fullName evidence="1">Hemagglutinin HA2 chain</fullName>
        </recommendedName>
    </component>
</protein>
<organism>
    <name type="scientific">Influenza A virus (strain A/Mallard/Ohio/556/1987 H5N9)</name>
    <dbReference type="NCBI Taxonomy" id="293055"/>
    <lineage>
        <taxon>Viruses</taxon>
        <taxon>Riboviria</taxon>
        <taxon>Orthornavirae</taxon>
        <taxon>Negarnaviricota</taxon>
        <taxon>Polyploviricotina</taxon>
        <taxon>Insthoviricetes</taxon>
        <taxon>Articulavirales</taxon>
        <taxon>Orthomyxoviridae</taxon>
        <taxon>Alphainfluenzavirus</taxon>
        <taxon>Alphainfluenzavirus influenzae</taxon>
        <taxon>Influenza A virus</taxon>
    </lineage>
</organism>
<proteinExistence type="evidence at transcript level"/>
<keyword id="KW-1167">Clathrin- and caveolin-independent endocytosis of virus by host</keyword>
<keyword id="KW-1165">Clathrin-mediated endocytosis of virus by host</keyword>
<keyword id="KW-1015">Disulfide bond</keyword>
<keyword id="KW-1170">Fusion of virus membrane with host endosomal membrane</keyword>
<keyword id="KW-1168">Fusion of virus membrane with host membrane</keyword>
<keyword id="KW-0325">Glycoprotein</keyword>
<keyword id="KW-0348">Hemagglutinin</keyword>
<keyword id="KW-1032">Host cell membrane</keyword>
<keyword id="KW-1043">Host membrane</keyword>
<keyword id="KW-0945">Host-virus interaction</keyword>
<keyword id="KW-0449">Lipoprotein</keyword>
<keyword id="KW-0472">Membrane</keyword>
<keyword id="KW-0564">Palmitate</keyword>
<keyword id="KW-0732">Signal</keyword>
<keyword id="KW-0812">Transmembrane</keyword>
<keyword id="KW-1133">Transmembrane helix</keyword>
<keyword id="KW-1161">Viral attachment to host cell</keyword>
<keyword id="KW-0261">Viral envelope protein</keyword>
<keyword id="KW-1162">Viral penetration into host cytoplasm</keyword>
<keyword id="KW-0946">Virion</keyword>
<keyword id="KW-1164">Virus endocytosis by host</keyword>
<keyword id="KW-1160">Virus entry into host cell</keyword>
<reference key="1">
    <citation type="journal article" date="1997" name="Virus Res.">
        <title>Evolution of H5 subtype avian influenza A viruses in North America.</title>
        <authorList>
            <person name="Garcia M."/>
            <person name="Suarez D.L."/>
            <person name="Crawford J.M."/>
            <person name="Latimer J.W."/>
            <person name="Slemons R.D."/>
            <person name="Swayne D.E."/>
            <person name="Purdue M.L."/>
        </authorList>
    </citation>
    <scope>NUCLEOTIDE SEQUENCE [MRNA]</scope>
</reference>
<name>HEMA_I87A1</name>
<dbReference type="EMBL" id="U67783">
    <property type="protein sequence ID" value="AAC58999.1"/>
    <property type="molecule type" value="mRNA"/>
</dbReference>
<dbReference type="SMR" id="P87506"/>
<dbReference type="MINT" id="P87506"/>
<dbReference type="GlyCosmos" id="P87506">
    <property type="glycosylation" value="6 sites, No reported glycans"/>
</dbReference>
<dbReference type="GO" id="GO:0020002">
    <property type="term" value="C:host cell plasma membrane"/>
    <property type="evidence" value="ECO:0007669"/>
    <property type="project" value="UniProtKB-SubCell"/>
</dbReference>
<dbReference type="GO" id="GO:0016020">
    <property type="term" value="C:membrane"/>
    <property type="evidence" value="ECO:0007669"/>
    <property type="project" value="UniProtKB-UniRule"/>
</dbReference>
<dbReference type="GO" id="GO:0019031">
    <property type="term" value="C:viral envelope"/>
    <property type="evidence" value="ECO:0007669"/>
    <property type="project" value="UniProtKB-UniRule"/>
</dbReference>
<dbReference type="GO" id="GO:0055036">
    <property type="term" value="C:virion membrane"/>
    <property type="evidence" value="ECO:0007669"/>
    <property type="project" value="UniProtKB-SubCell"/>
</dbReference>
<dbReference type="GO" id="GO:0046789">
    <property type="term" value="F:host cell surface receptor binding"/>
    <property type="evidence" value="ECO:0007669"/>
    <property type="project" value="UniProtKB-UniRule"/>
</dbReference>
<dbReference type="GO" id="GO:0075512">
    <property type="term" value="P:clathrin-dependent endocytosis of virus by host cell"/>
    <property type="evidence" value="ECO:0007669"/>
    <property type="project" value="UniProtKB-UniRule"/>
</dbReference>
<dbReference type="GO" id="GO:0039654">
    <property type="term" value="P:fusion of virus membrane with host endosome membrane"/>
    <property type="evidence" value="ECO:0007669"/>
    <property type="project" value="UniProtKB-UniRule"/>
</dbReference>
<dbReference type="GO" id="GO:0019064">
    <property type="term" value="P:fusion of virus membrane with host plasma membrane"/>
    <property type="evidence" value="ECO:0007669"/>
    <property type="project" value="InterPro"/>
</dbReference>
<dbReference type="GO" id="GO:0046761">
    <property type="term" value="P:viral budding from plasma membrane"/>
    <property type="evidence" value="ECO:0007669"/>
    <property type="project" value="UniProtKB-UniRule"/>
</dbReference>
<dbReference type="GO" id="GO:0019062">
    <property type="term" value="P:virion attachment to host cell"/>
    <property type="evidence" value="ECO:0007669"/>
    <property type="project" value="UniProtKB-KW"/>
</dbReference>
<dbReference type="FunFam" id="3.90.209.20:FF:000001">
    <property type="entry name" value="Hemagglutinin"/>
    <property type="match status" value="1"/>
</dbReference>
<dbReference type="Gene3D" id="3.90.20.10">
    <property type="match status" value="1"/>
</dbReference>
<dbReference type="Gene3D" id="3.90.209.20">
    <property type="match status" value="1"/>
</dbReference>
<dbReference type="HAMAP" id="MF_04072">
    <property type="entry name" value="INFV_HEMA"/>
    <property type="match status" value="1"/>
</dbReference>
<dbReference type="InterPro" id="IPR008980">
    <property type="entry name" value="Capsid_hemagglutn"/>
</dbReference>
<dbReference type="InterPro" id="IPR013828">
    <property type="entry name" value="Hemagglutn_HA1_a/b_dom_sf"/>
</dbReference>
<dbReference type="InterPro" id="IPR000149">
    <property type="entry name" value="Hemagglutn_influenz_A"/>
</dbReference>
<dbReference type="InterPro" id="IPR001364">
    <property type="entry name" value="Hemagglutn_influenz_A/B"/>
</dbReference>
<dbReference type="Pfam" id="PF00509">
    <property type="entry name" value="Hemagglutinin"/>
    <property type="match status" value="1"/>
</dbReference>
<dbReference type="PRINTS" id="PR00330">
    <property type="entry name" value="HEMAGGLUTN1"/>
</dbReference>
<dbReference type="PRINTS" id="PR00329">
    <property type="entry name" value="HEMAGGLUTN12"/>
</dbReference>
<dbReference type="SUPFAM" id="SSF58064">
    <property type="entry name" value="Influenza hemagglutinin (stalk)"/>
    <property type="match status" value="1"/>
</dbReference>
<dbReference type="SUPFAM" id="SSF49818">
    <property type="entry name" value="Viral protein domain"/>
    <property type="match status" value="1"/>
</dbReference>
<accession>P87506</accession>